<organism>
    <name type="scientific">Pseudomonas putida (strain GB-1)</name>
    <dbReference type="NCBI Taxonomy" id="76869"/>
    <lineage>
        <taxon>Bacteria</taxon>
        <taxon>Pseudomonadati</taxon>
        <taxon>Pseudomonadota</taxon>
        <taxon>Gammaproteobacteria</taxon>
        <taxon>Pseudomonadales</taxon>
        <taxon>Pseudomonadaceae</taxon>
        <taxon>Pseudomonas</taxon>
    </lineage>
</organism>
<name>Y4120_PSEPG</name>
<proteinExistence type="inferred from homology"/>
<protein>
    <recommendedName>
        <fullName evidence="1">YcgL domain-containing protein PputGB1_4120</fullName>
    </recommendedName>
</protein>
<reference key="1">
    <citation type="submission" date="2008-01" db="EMBL/GenBank/DDBJ databases">
        <title>Complete sequence of Pseudomonas putida GB-1.</title>
        <authorList>
            <consortium name="US DOE Joint Genome Institute"/>
            <person name="Copeland A."/>
            <person name="Lucas S."/>
            <person name="Lapidus A."/>
            <person name="Barry K."/>
            <person name="Glavina del Rio T."/>
            <person name="Dalin E."/>
            <person name="Tice H."/>
            <person name="Pitluck S."/>
            <person name="Bruce D."/>
            <person name="Goodwin L."/>
            <person name="Chertkov O."/>
            <person name="Brettin T."/>
            <person name="Detter J.C."/>
            <person name="Han C."/>
            <person name="Kuske C.R."/>
            <person name="Schmutz J."/>
            <person name="Larimer F."/>
            <person name="Land M."/>
            <person name="Hauser L."/>
            <person name="Kyrpides N."/>
            <person name="Kim E."/>
            <person name="McCarthy J.K."/>
            <person name="Richardson P."/>
        </authorList>
    </citation>
    <scope>NUCLEOTIDE SEQUENCE [LARGE SCALE GENOMIC DNA]</scope>
    <source>
        <strain>GB-1</strain>
    </source>
</reference>
<gene>
    <name type="ordered locus">PputGB1_4120</name>
</gene>
<evidence type="ECO:0000255" key="1">
    <source>
        <dbReference type="HAMAP-Rule" id="MF_01866"/>
    </source>
</evidence>
<sequence length="97" mass="11383">MKRICSIYKSPRKNEMYLYVLKADGLERVPEGLLPFFGTPMHAFDLVLSPERKLAREDITKVLENLDNQGYHLQMPPAEDEYIEHLPEELLRRNDPV</sequence>
<feature type="chain" id="PRO_0000375336" description="YcgL domain-containing protein PputGB1_4120">
    <location>
        <begin position="1"/>
        <end position="97"/>
    </location>
</feature>
<feature type="domain" description="YcgL" evidence="1">
    <location>
        <begin position="3"/>
        <end position="87"/>
    </location>
</feature>
<dbReference type="EMBL" id="CP000926">
    <property type="protein sequence ID" value="ABZ00011.1"/>
    <property type="molecule type" value="Genomic_DNA"/>
</dbReference>
<dbReference type="RefSeq" id="WP_012273692.1">
    <property type="nucleotide sequence ID" value="NC_010322.1"/>
</dbReference>
<dbReference type="SMR" id="B0KSS4"/>
<dbReference type="KEGG" id="ppg:PputGB1_4120"/>
<dbReference type="eggNOG" id="COG3100">
    <property type="taxonomic scope" value="Bacteria"/>
</dbReference>
<dbReference type="HOGENOM" id="CLU_155118_2_0_6"/>
<dbReference type="Proteomes" id="UP000002157">
    <property type="component" value="Chromosome"/>
</dbReference>
<dbReference type="Gene3D" id="3.10.510.20">
    <property type="entry name" value="YcgL domain"/>
    <property type="match status" value="1"/>
</dbReference>
<dbReference type="HAMAP" id="MF_01866">
    <property type="entry name" value="UPF0745"/>
    <property type="match status" value="1"/>
</dbReference>
<dbReference type="InterPro" id="IPR038068">
    <property type="entry name" value="YcgL-like_sf"/>
</dbReference>
<dbReference type="InterPro" id="IPR027354">
    <property type="entry name" value="YcgL_dom"/>
</dbReference>
<dbReference type="PANTHER" id="PTHR38109">
    <property type="entry name" value="PROTEIN YCGL"/>
    <property type="match status" value="1"/>
</dbReference>
<dbReference type="PANTHER" id="PTHR38109:SF1">
    <property type="entry name" value="PROTEIN YCGL"/>
    <property type="match status" value="1"/>
</dbReference>
<dbReference type="Pfam" id="PF05166">
    <property type="entry name" value="YcgL"/>
    <property type="match status" value="1"/>
</dbReference>
<dbReference type="SUPFAM" id="SSF160191">
    <property type="entry name" value="YcgL-like"/>
    <property type="match status" value="1"/>
</dbReference>
<dbReference type="PROSITE" id="PS51648">
    <property type="entry name" value="YCGL"/>
    <property type="match status" value="1"/>
</dbReference>
<accession>B0KSS4</accession>